<accession>B1VKE2</accession>
<keyword id="KW-0150">Chloroplast</keyword>
<keyword id="KW-0934">Plastid</keyword>
<keyword id="KW-0687">Ribonucleoprotein</keyword>
<keyword id="KW-0689">Ribosomal protein</keyword>
<organism>
    <name type="scientific">Cryptomeria japonica</name>
    <name type="common">Japanese cedar</name>
    <name type="synonym">Cupressus japonica</name>
    <dbReference type="NCBI Taxonomy" id="3369"/>
    <lineage>
        <taxon>Eukaryota</taxon>
        <taxon>Viridiplantae</taxon>
        <taxon>Streptophyta</taxon>
        <taxon>Embryophyta</taxon>
        <taxon>Tracheophyta</taxon>
        <taxon>Spermatophyta</taxon>
        <taxon>Pinopsida</taxon>
        <taxon>Pinidae</taxon>
        <taxon>Conifers II</taxon>
        <taxon>Cupressales</taxon>
        <taxon>Cupressaceae</taxon>
        <taxon>Cryptomeria</taxon>
    </lineage>
</organism>
<proteinExistence type="inferred from homology"/>
<protein>
    <recommendedName>
        <fullName evidence="1">Large ribosomal subunit protein bL33c</fullName>
    </recommendedName>
    <alternativeName>
        <fullName evidence="2">50S ribosomal protein L33, chloroplastic</fullName>
    </alternativeName>
</protein>
<dbReference type="EMBL" id="AP009377">
    <property type="protein sequence ID" value="BAG16653.1"/>
    <property type="molecule type" value="Genomic_DNA"/>
</dbReference>
<dbReference type="RefSeq" id="YP_001806655.1">
    <property type="nucleotide sequence ID" value="NC_010548.1"/>
</dbReference>
<dbReference type="GeneID" id="6166639"/>
<dbReference type="KEGG" id="cjf:6166639"/>
<dbReference type="OrthoDB" id="361870at2759"/>
<dbReference type="GO" id="GO:0009507">
    <property type="term" value="C:chloroplast"/>
    <property type="evidence" value="ECO:0007669"/>
    <property type="project" value="UniProtKB-SubCell"/>
</dbReference>
<dbReference type="GO" id="GO:1990904">
    <property type="term" value="C:ribonucleoprotein complex"/>
    <property type="evidence" value="ECO:0007669"/>
    <property type="project" value="UniProtKB-KW"/>
</dbReference>
<dbReference type="GO" id="GO:0005840">
    <property type="term" value="C:ribosome"/>
    <property type="evidence" value="ECO:0007669"/>
    <property type="project" value="UniProtKB-KW"/>
</dbReference>
<dbReference type="GO" id="GO:0003735">
    <property type="term" value="F:structural constituent of ribosome"/>
    <property type="evidence" value="ECO:0007669"/>
    <property type="project" value="InterPro"/>
</dbReference>
<dbReference type="GO" id="GO:0006412">
    <property type="term" value="P:translation"/>
    <property type="evidence" value="ECO:0007669"/>
    <property type="project" value="UniProtKB-UniRule"/>
</dbReference>
<dbReference type="Gene3D" id="2.20.28.120">
    <property type="entry name" value="Ribosomal protein L33"/>
    <property type="match status" value="1"/>
</dbReference>
<dbReference type="HAMAP" id="MF_00294">
    <property type="entry name" value="Ribosomal_bL33"/>
    <property type="match status" value="1"/>
</dbReference>
<dbReference type="InterPro" id="IPR001705">
    <property type="entry name" value="Ribosomal_bL33"/>
</dbReference>
<dbReference type="InterPro" id="IPR018264">
    <property type="entry name" value="Ribosomal_bL33_CS"/>
</dbReference>
<dbReference type="InterPro" id="IPR038584">
    <property type="entry name" value="Ribosomal_bL33_sf"/>
</dbReference>
<dbReference type="InterPro" id="IPR011332">
    <property type="entry name" value="Ribosomal_zn-bd"/>
</dbReference>
<dbReference type="NCBIfam" id="NF001764">
    <property type="entry name" value="PRK00504.1"/>
    <property type="match status" value="1"/>
</dbReference>
<dbReference type="NCBIfam" id="NF001860">
    <property type="entry name" value="PRK00595.1"/>
    <property type="match status" value="1"/>
</dbReference>
<dbReference type="NCBIfam" id="TIGR01023">
    <property type="entry name" value="rpmG_bact"/>
    <property type="match status" value="1"/>
</dbReference>
<dbReference type="PANTHER" id="PTHR43168">
    <property type="entry name" value="50S RIBOSOMAL PROTEIN L33, CHLOROPLASTIC"/>
    <property type="match status" value="1"/>
</dbReference>
<dbReference type="PANTHER" id="PTHR43168:SF2">
    <property type="entry name" value="LARGE RIBOSOMAL SUBUNIT PROTEIN BL33C"/>
    <property type="match status" value="1"/>
</dbReference>
<dbReference type="Pfam" id="PF00471">
    <property type="entry name" value="Ribosomal_L33"/>
    <property type="match status" value="1"/>
</dbReference>
<dbReference type="SUPFAM" id="SSF57829">
    <property type="entry name" value="Zn-binding ribosomal proteins"/>
    <property type="match status" value="1"/>
</dbReference>
<dbReference type="PROSITE" id="PS00582">
    <property type="entry name" value="RIBOSOMAL_L33"/>
    <property type="match status" value="1"/>
</dbReference>
<name>RK33_CRYJA</name>
<feature type="chain" id="PRO_0000356795" description="Large ribosomal subunit protein bL33c">
    <location>
        <begin position="1"/>
        <end position="66"/>
    </location>
</feature>
<sequence length="66" mass="7601">MAKGGNVRVTITLECTSCTQDSVNKKSPGISRYTTRKNRRNTPLRLELKKFCPYCYKHTIHGEIKK</sequence>
<geneLocation type="chloroplast"/>
<reference key="1">
    <citation type="journal article" date="2008" name="BMC Plant Biol.">
        <title>Complete nucleotide sequence of the Cryptomeria japonica D. Don. chloroplast genome and comparative chloroplast genomics: diversified genomic structure of coniferous species.</title>
        <authorList>
            <person name="Hirao T."/>
            <person name="Watanabe A."/>
            <person name="Kurita M."/>
            <person name="Kondo T."/>
            <person name="Takata K."/>
        </authorList>
    </citation>
    <scope>NUCLEOTIDE SEQUENCE [LARGE SCALE GENOMIC DNA]</scope>
</reference>
<evidence type="ECO:0000255" key="1">
    <source>
        <dbReference type="HAMAP-Rule" id="MF_00294"/>
    </source>
</evidence>
<evidence type="ECO:0000305" key="2"/>
<comment type="subcellular location">
    <subcellularLocation>
        <location>Plastid</location>
        <location>Chloroplast</location>
    </subcellularLocation>
</comment>
<comment type="similarity">
    <text evidence="1">Belongs to the bacterial ribosomal protein bL33 family.</text>
</comment>
<gene>
    <name evidence="1" type="primary">rpl33</name>
</gene>